<evidence type="ECO:0000250" key="1">
    <source>
        <dbReference type="UniProtKB" id="C0H691"/>
    </source>
</evidence>
<evidence type="ECO:0000250" key="2">
    <source>
        <dbReference type="UniProtKB" id="C0H692"/>
    </source>
</evidence>
<evidence type="ECO:0000255" key="3"/>
<evidence type="ECO:0000303" key="4">
    <source>
    </source>
</evidence>
<evidence type="ECO:0000305" key="5"/>
<evidence type="ECO:0000305" key="6">
    <source>
    </source>
</evidence>
<evidence type="ECO:0000305" key="7">
    <source>
    </source>
</evidence>
<accession>C1KIZ4</accession>
<comment type="function">
    <text evidence="1 2 6">Induces neurotoxic symptoms on zebrafish (By similarity). Has also been claimed to be implied in calcification, but tests on homolog proteins suggest that proteins of this family have a neurotoxic function and not a calcification function (PubMed:19283069).</text>
</comment>
<comment type="subcellular location">
    <subcellularLocation>
        <location>Secreted</location>
    </subcellularLocation>
    <subcellularLocation>
        <location evidence="5">Nematocyst</location>
    </subcellularLocation>
</comment>
<comment type="PTM">
    <text evidence="5">Contains 4 disulfide bonds.</text>
</comment>
<comment type="similarity">
    <text evidence="7">Belongs to the Cnidaria small cysteine-rich protein (SCRiP) family. gamma subfamily.</text>
</comment>
<dbReference type="EMBL" id="FJ842107">
    <property type="protein sequence ID" value="ACO24835.1"/>
    <property type="molecule type" value="mRNA"/>
</dbReference>
<dbReference type="GO" id="GO:0005576">
    <property type="term" value="C:extracellular region"/>
    <property type="evidence" value="ECO:0007669"/>
    <property type="project" value="UniProtKB-SubCell"/>
</dbReference>
<dbReference type="GO" id="GO:0042151">
    <property type="term" value="C:nematocyst"/>
    <property type="evidence" value="ECO:0007669"/>
    <property type="project" value="UniProtKB-SubCell"/>
</dbReference>
<dbReference type="GO" id="GO:0090729">
    <property type="term" value="F:toxin activity"/>
    <property type="evidence" value="ECO:0007669"/>
    <property type="project" value="UniProtKB-KW"/>
</dbReference>
<keyword id="KW-1015">Disulfide bond</keyword>
<keyword id="KW-0166">Nematocyst</keyword>
<keyword id="KW-0528">Neurotoxin</keyword>
<keyword id="KW-0964">Secreted</keyword>
<keyword id="KW-0732">Signal</keyword>
<keyword id="KW-0800">Toxin</keyword>
<proteinExistence type="inferred from homology"/>
<name>SCR5G_ORBFA</name>
<organism>
    <name type="scientific">Orbicella faveolata</name>
    <name type="common">Mountainous star coral</name>
    <name type="synonym">Montastraea faveolata</name>
    <dbReference type="NCBI Taxonomy" id="48498"/>
    <lineage>
        <taxon>Eukaryota</taxon>
        <taxon>Metazoa</taxon>
        <taxon>Cnidaria</taxon>
        <taxon>Anthozoa</taxon>
        <taxon>Hexacorallia</taxon>
        <taxon>Scleractinia</taxon>
        <taxon>Faviina</taxon>
        <taxon>Merulinidae</taxon>
        <taxon>Orbicella</taxon>
    </lineage>
</organism>
<feature type="signal peptide" evidence="3">
    <location>
        <begin position="1"/>
        <end position="24"/>
    </location>
</feature>
<feature type="chain" id="PRO_0000434286" description="Small cysteine-rich protein 5">
    <location>
        <begin position="25"/>
        <end position="68"/>
    </location>
</feature>
<reference key="1">
    <citation type="journal article" date="2009" name="PLoS ONE">
        <title>Identification and gene expression analysis of a taxonomically restricted cysteine-rich protein family in reef-building corals.</title>
        <authorList>
            <person name="Sunagawa S."/>
            <person name="DeSalvo M.K."/>
            <person name="Voolstra C.R."/>
            <person name="Reyes-Bermudez A."/>
            <person name="Medina M."/>
        </authorList>
    </citation>
    <scope>NUCLEOTIDE SEQUENCE [MRNA]</scope>
</reference>
<reference key="2">
    <citation type="journal article" date="2024" name="Toxins">
        <title>Evolutionary analysis of cnidaria small cysteine-rich proteins (scrips), an enigmatic neurotoxin family from stony corals and sea anemones (Anthozoa: Hexacorallia).</title>
        <authorList>
            <person name="Barroso R.A."/>
            <person name="Ramos L."/>
            <person name="Moreno H."/>
            <person name="Antunes A."/>
        </authorList>
    </citation>
    <scope>NOMENCLATURE</scope>
</reference>
<protein>
    <recommendedName>
        <fullName evidence="4">Small cysteine-rich protein 5</fullName>
        <shortName evidence="4">Mfav-SCRiP5</shortName>
        <shortName evidence="4">SCRiP5</shortName>
    </recommendedName>
</protein>
<sequence length="68" mass="7735">MAVKFHLCLLLIILVGMGAHVAFADLPLCDYPYGACFYRADPCPDDMPVECPNYFYCPQQTDRCCCYE</sequence>